<keyword id="KW-0067">ATP-binding</keyword>
<keyword id="KW-0997">Cell inner membrane</keyword>
<keyword id="KW-1003">Cell membrane</keyword>
<keyword id="KW-0406">Ion transport</keyword>
<keyword id="KW-0472">Membrane</keyword>
<keyword id="KW-0547">Nucleotide-binding</keyword>
<keyword id="KW-0630">Potassium</keyword>
<keyword id="KW-0633">Potassium transport</keyword>
<keyword id="KW-1185">Reference proteome</keyword>
<keyword id="KW-0812">Transmembrane</keyword>
<keyword id="KW-1133">Transmembrane helix</keyword>
<keyword id="KW-0813">Transport</keyword>
<feature type="chain" id="PRO_0000196983" description="Potassium-transporting ATPase KdpC subunit 1">
    <location>
        <begin position="1"/>
        <end position="202"/>
    </location>
</feature>
<feature type="transmembrane region" description="Helical" evidence="1">
    <location>
        <begin position="17"/>
        <end position="37"/>
    </location>
</feature>
<protein>
    <recommendedName>
        <fullName evidence="1">Potassium-transporting ATPase KdpC subunit 1</fullName>
    </recommendedName>
    <alternativeName>
        <fullName evidence="1">ATP phosphohydrolase [potassium-transporting] C chain 1</fullName>
    </alternativeName>
    <alternativeName>
        <fullName evidence="1">Potassium-binding and translocating subunit C 1</fullName>
    </alternativeName>
    <alternativeName>
        <fullName evidence="1">Potassium-translocating ATPase C chain 1</fullName>
    </alternativeName>
</protein>
<dbReference type="EMBL" id="BA000019">
    <property type="protein sequence ID" value="BAB74850.1"/>
    <property type="molecule type" value="Genomic_DNA"/>
</dbReference>
<dbReference type="PIR" id="AH2199">
    <property type="entry name" value="AH2199"/>
</dbReference>
<dbReference type="SMR" id="Q8YSD7"/>
<dbReference type="STRING" id="103690.gene:10495188"/>
<dbReference type="KEGG" id="ana:all3151"/>
<dbReference type="eggNOG" id="COG2156">
    <property type="taxonomic scope" value="Bacteria"/>
</dbReference>
<dbReference type="OrthoDB" id="9809491at2"/>
<dbReference type="Proteomes" id="UP000002483">
    <property type="component" value="Chromosome"/>
</dbReference>
<dbReference type="GO" id="GO:0005886">
    <property type="term" value="C:plasma membrane"/>
    <property type="evidence" value="ECO:0007669"/>
    <property type="project" value="UniProtKB-SubCell"/>
</dbReference>
<dbReference type="GO" id="GO:0005524">
    <property type="term" value="F:ATP binding"/>
    <property type="evidence" value="ECO:0007669"/>
    <property type="project" value="UniProtKB-UniRule"/>
</dbReference>
<dbReference type="GO" id="GO:0008556">
    <property type="term" value="F:P-type potassium transmembrane transporter activity"/>
    <property type="evidence" value="ECO:0007669"/>
    <property type="project" value="InterPro"/>
</dbReference>
<dbReference type="HAMAP" id="MF_00276">
    <property type="entry name" value="KdpC"/>
    <property type="match status" value="1"/>
</dbReference>
<dbReference type="InterPro" id="IPR003820">
    <property type="entry name" value="KdpC"/>
</dbReference>
<dbReference type="NCBIfam" id="TIGR00681">
    <property type="entry name" value="kdpC"/>
    <property type="match status" value="1"/>
</dbReference>
<dbReference type="NCBIfam" id="NF001454">
    <property type="entry name" value="PRK00315.1"/>
    <property type="match status" value="1"/>
</dbReference>
<dbReference type="NCBIfam" id="NF010607">
    <property type="entry name" value="PRK14003.1"/>
    <property type="match status" value="1"/>
</dbReference>
<dbReference type="PANTHER" id="PTHR30042">
    <property type="entry name" value="POTASSIUM-TRANSPORTING ATPASE C CHAIN"/>
    <property type="match status" value="1"/>
</dbReference>
<dbReference type="PANTHER" id="PTHR30042:SF2">
    <property type="entry name" value="POTASSIUM-TRANSPORTING ATPASE KDPC SUBUNIT"/>
    <property type="match status" value="1"/>
</dbReference>
<dbReference type="Pfam" id="PF02669">
    <property type="entry name" value="KdpC"/>
    <property type="match status" value="1"/>
</dbReference>
<dbReference type="PIRSF" id="PIRSF001296">
    <property type="entry name" value="K_ATPase_KdpC"/>
    <property type="match status" value="1"/>
</dbReference>
<name>KDPC1_NOSS1</name>
<organism>
    <name type="scientific">Nostoc sp. (strain PCC 7120 / SAG 25.82 / UTEX 2576)</name>
    <dbReference type="NCBI Taxonomy" id="103690"/>
    <lineage>
        <taxon>Bacteria</taxon>
        <taxon>Bacillati</taxon>
        <taxon>Cyanobacteriota</taxon>
        <taxon>Cyanophyceae</taxon>
        <taxon>Nostocales</taxon>
        <taxon>Nostocaceae</taxon>
        <taxon>Nostoc</taxon>
    </lineage>
</organism>
<proteinExistence type="inferred from homology"/>
<sequence length="202" mass="22052">MSFAREASRAIRSSFVLWVIAAVIYPFFMIAVGQIVFPHQANGSLVRDSRGQVLGSTLIGQPFTSDRYFNSRPSTTVYSTANPNKDDNLVLQTGISGASNLAPSNPQLIERIKDEDLNRLQTSGIQPTADLVYTSGSSLDPHITPEAARAQVSRIAKVRQLPPQQLETLITQNTDSRFLGIFGEPGVNVLQLNLALDELKPT</sequence>
<comment type="function">
    <text evidence="1">Part of the high-affinity ATP-driven potassium transport (or Kdp) system, which catalyzes the hydrolysis of ATP coupled with the electrogenic transport of potassium into the cytoplasm. This subunit acts as a catalytic chaperone that increases the ATP-binding affinity of the ATP-hydrolyzing subunit KdpB by the formation of a transient KdpB/KdpC/ATP ternary complex.</text>
</comment>
<comment type="subunit">
    <text evidence="1">The system is composed of three essential subunits: KdpA, KdpB and KdpC.</text>
</comment>
<comment type="subcellular location">
    <subcellularLocation>
        <location evidence="1">Cell inner membrane</location>
        <topology evidence="1">Single-pass membrane protein</topology>
    </subcellularLocation>
</comment>
<comment type="similarity">
    <text evidence="1">Belongs to the KdpC family.</text>
</comment>
<evidence type="ECO:0000255" key="1">
    <source>
        <dbReference type="HAMAP-Rule" id="MF_00276"/>
    </source>
</evidence>
<accession>Q8YSD7</accession>
<gene>
    <name evidence="1" type="primary">kdpC1</name>
    <name type="ordered locus">all3151</name>
</gene>
<reference key="1">
    <citation type="journal article" date="2001" name="DNA Res.">
        <title>Complete genomic sequence of the filamentous nitrogen-fixing cyanobacterium Anabaena sp. strain PCC 7120.</title>
        <authorList>
            <person name="Kaneko T."/>
            <person name="Nakamura Y."/>
            <person name="Wolk C.P."/>
            <person name="Kuritz T."/>
            <person name="Sasamoto S."/>
            <person name="Watanabe A."/>
            <person name="Iriguchi M."/>
            <person name="Ishikawa A."/>
            <person name="Kawashima K."/>
            <person name="Kimura T."/>
            <person name="Kishida Y."/>
            <person name="Kohara M."/>
            <person name="Matsumoto M."/>
            <person name="Matsuno A."/>
            <person name="Muraki A."/>
            <person name="Nakazaki N."/>
            <person name="Shimpo S."/>
            <person name="Sugimoto M."/>
            <person name="Takazawa M."/>
            <person name="Yamada M."/>
            <person name="Yasuda M."/>
            <person name="Tabata S."/>
        </authorList>
    </citation>
    <scope>NUCLEOTIDE SEQUENCE [LARGE SCALE GENOMIC DNA]</scope>
    <source>
        <strain>PCC 7120 / SAG 25.82 / UTEX 2576</strain>
    </source>
</reference>